<keyword id="KW-0312">Gluconeogenesis</keyword>
<keyword id="KW-0324">Glycolysis</keyword>
<keyword id="KW-0413">Isomerase</keyword>
<keyword id="KW-1185">Reference proteome</keyword>
<name>GPMA_SPHAL</name>
<sequence length="228" mass="25288">MPQLILIRHGQSQWNLENRFTGWWDVDVTEKGAAEAWAAGELMKAKGVAPDTCFTSVQTRAIKTLNLALEAMGRLWLPVTKDWRLNERHYGGLTGLDKAETAAKHGDEQVRIWRRSFDIPPPPLEAGSQWDLSADPRYAGIAIPSTESLKDTIARVLPYYEAAIAPQLAAGRTVLISAHGNSLRALVKHLSGISDADITGLEIPTGQPIVYEINDDLSARERYYLSER</sequence>
<reference key="1">
    <citation type="journal article" date="2009" name="Proc. Natl. Acad. Sci. U.S.A.">
        <title>The genomic basis of trophic strategy in marine bacteria.</title>
        <authorList>
            <person name="Lauro F.M."/>
            <person name="McDougald D."/>
            <person name="Thomas T."/>
            <person name="Williams T.J."/>
            <person name="Egan S."/>
            <person name="Rice S."/>
            <person name="DeMaere M.Z."/>
            <person name="Ting L."/>
            <person name="Ertan H."/>
            <person name="Johnson J."/>
            <person name="Ferriera S."/>
            <person name="Lapidus A."/>
            <person name="Anderson I."/>
            <person name="Kyrpides N."/>
            <person name="Munk A.C."/>
            <person name="Detter C."/>
            <person name="Han C.S."/>
            <person name="Brown M.V."/>
            <person name="Robb F.T."/>
            <person name="Kjelleberg S."/>
            <person name="Cavicchioli R."/>
        </authorList>
    </citation>
    <scope>NUCLEOTIDE SEQUENCE [LARGE SCALE GENOMIC DNA]</scope>
    <source>
        <strain>DSM 13593 / LMG 18877 / RB2256</strain>
    </source>
</reference>
<protein>
    <recommendedName>
        <fullName evidence="1">2,3-bisphosphoglycerate-dependent phosphoglycerate mutase</fullName>
        <shortName evidence="1">BPG-dependent PGAM</shortName>
        <shortName evidence="1">PGAM</shortName>
        <shortName evidence="1">Phosphoglyceromutase</shortName>
        <shortName evidence="1">dPGM</shortName>
        <ecNumber evidence="1">5.4.2.11</ecNumber>
    </recommendedName>
</protein>
<comment type="function">
    <text evidence="1">Catalyzes the interconversion of 2-phosphoglycerate and 3-phosphoglycerate.</text>
</comment>
<comment type="catalytic activity">
    <reaction evidence="1">
        <text>(2R)-2-phosphoglycerate = (2R)-3-phosphoglycerate</text>
        <dbReference type="Rhea" id="RHEA:15901"/>
        <dbReference type="ChEBI" id="CHEBI:58272"/>
        <dbReference type="ChEBI" id="CHEBI:58289"/>
        <dbReference type="EC" id="5.4.2.11"/>
    </reaction>
</comment>
<comment type="pathway">
    <text evidence="1">Carbohydrate degradation; glycolysis; pyruvate from D-glyceraldehyde 3-phosphate: step 3/5.</text>
</comment>
<comment type="subunit">
    <text evidence="1">Homodimer.</text>
</comment>
<comment type="similarity">
    <text evidence="1">Belongs to the phosphoglycerate mutase family. BPG-dependent PGAM subfamily.</text>
</comment>
<accession>Q1GP88</accession>
<evidence type="ECO:0000255" key="1">
    <source>
        <dbReference type="HAMAP-Rule" id="MF_01039"/>
    </source>
</evidence>
<gene>
    <name evidence="1" type="primary">gpmA</name>
    <name type="ordered locus">Sala_2829</name>
</gene>
<dbReference type="EC" id="5.4.2.11" evidence="1"/>
<dbReference type="EMBL" id="CP000356">
    <property type="protein sequence ID" value="ABF54534.1"/>
    <property type="molecule type" value="Genomic_DNA"/>
</dbReference>
<dbReference type="RefSeq" id="WP_011543098.1">
    <property type="nucleotide sequence ID" value="NC_008048.1"/>
</dbReference>
<dbReference type="SMR" id="Q1GP88"/>
<dbReference type="STRING" id="317655.Sala_2829"/>
<dbReference type="KEGG" id="sal:Sala_2829"/>
<dbReference type="eggNOG" id="COG0588">
    <property type="taxonomic scope" value="Bacteria"/>
</dbReference>
<dbReference type="HOGENOM" id="CLU_033323_1_1_5"/>
<dbReference type="OrthoDB" id="9781415at2"/>
<dbReference type="UniPathway" id="UPA00109">
    <property type="reaction ID" value="UER00186"/>
</dbReference>
<dbReference type="Proteomes" id="UP000006578">
    <property type="component" value="Chromosome"/>
</dbReference>
<dbReference type="GO" id="GO:0004619">
    <property type="term" value="F:phosphoglycerate mutase activity"/>
    <property type="evidence" value="ECO:0007669"/>
    <property type="project" value="UniProtKB-EC"/>
</dbReference>
<dbReference type="GO" id="GO:0006094">
    <property type="term" value="P:gluconeogenesis"/>
    <property type="evidence" value="ECO:0007669"/>
    <property type="project" value="UniProtKB-UniRule"/>
</dbReference>
<dbReference type="GO" id="GO:0006096">
    <property type="term" value="P:glycolytic process"/>
    <property type="evidence" value="ECO:0007669"/>
    <property type="project" value="UniProtKB-UniRule"/>
</dbReference>
<dbReference type="CDD" id="cd07067">
    <property type="entry name" value="HP_PGM_like"/>
    <property type="match status" value="1"/>
</dbReference>
<dbReference type="FunFam" id="3.40.50.1240:FF:000003">
    <property type="entry name" value="2,3-bisphosphoglycerate-dependent phosphoglycerate mutase"/>
    <property type="match status" value="1"/>
</dbReference>
<dbReference type="Gene3D" id="3.40.50.1240">
    <property type="entry name" value="Phosphoglycerate mutase-like"/>
    <property type="match status" value="1"/>
</dbReference>
<dbReference type="HAMAP" id="MF_01039">
    <property type="entry name" value="PGAM_GpmA"/>
    <property type="match status" value="1"/>
</dbReference>
<dbReference type="InterPro" id="IPR013078">
    <property type="entry name" value="His_Pase_superF_clade-1"/>
</dbReference>
<dbReference type="InterPro" id="IPR029033">
    <property type="entry name" value="His_PPase_superfam"/>
</dbReference>
<dbReference type="InterPro" id="IPR001345">
    <property type="entry name" value="PG/BPGM_mutase_AS"/>
</dbReference>
<dbReference type="InterPro" id="IPR005952">
    <property type="entry name" value="Phosphogly_mut1"/>
</dbReference>
<dbReference type="NCBIfam" id="TIGR01258">
    <property type="entry name" value="pgm_1"/>
    <property type="match status" value="1"/>
</dbReference>
<dbReference type="NCBIfam" id="NF010713">
    <property type="entry name" value="PRK14115.1"/>
    <property type="match status" value="1"/>
</dbReference>
<dbReference type="PANTHER" id="PTHR11931">
    <property type="entry name" value="PHOSPHOGLYCERATE MUTASE"/>
    <property type="match status" value="1"/>
</dbReference>
<dbReference type="Pfam" id="PF00300">
    <property type="entry name" value="His_Phos_1"/>
    <property type="match status" value="1"/>
</dbReference>
<dbReference type="PIRSF" id="PIRSF000709">
    <property type="entry name" value="6PFK_2-Ptase"/>
    <property type="match status" value="1"/>
</dbReference>
<dbReference type="SMART" id="SM00855">
    <property type="entry name" value="PGAM"/>
    <property type="match status" value="1"/>
</dbReference>
<dbReference type="SUPFAM" id="SSF53254">
    <property type="entry name" value="Phosphoglycerate mutase-like"/>
    <property type="match status" value="1"/>
</dbReference>
<dbReference type="PROSITE" id="PS00175">
    <property type="entry name" value="PG_MUTASE"/>
    <property type="match status" value="1"/>
</dbReference>
<feature type="chain" id="PRO_1000064099" description="2,3-bisphosphoglycerate-dependent phosphoglycerate mutase">
    <location>
        <begin position="1"/>
        <end position="228"/>
    </location>
</feature>
<feature type="active site" description="Tele-phosphohistidine intermediate" evidence="1">
    <location>
        <position position="9"/>
    </location>
</feature>
<feature type="active site" description="Proton donor/acceptor" evidence="1">
    <location>
        <position position="87"/>
    </location>
</feature>
<feature type="binding site" evidence="1">
    <location>
        <begin position="8"/>
        <end position="15"/>
    </location>
    <ligand>
        <name>substrate</name>
    </ligand>
</feature>
<feature type="binding site" evidence="1">
    <location>
        <begin position="21"/>
        <end position="22"/>
    </location>
    <ligand>
        <name>substrate</name>
    </ligand>
</feature>
<feature type="binding site" evidence="1">
    <location>
        <position position="60"/>
    </location>
    <ligand>
        <name>substrate</name>
    </ligand>
</feature>
<feature type="binding site" evidence="1">
    <location>
        <begin position="87"/>
        <end position="90"/>
    </location>
    <ligand>
        <name>substrate</name>
    </ligand>
</feature>
<feature type="binding site" evidence="1">
    <location>
        <position position="98"/>
    </location>
    <ligand>
        <name>substrate</name>
    </ligand>
</feature>
<feature type="binding site" evidence="1">
    <location>
        <begin position="114"/>
        <end position="115"/>
    </location>
    <ligand>
        <name>substrate</name>
    </ligand>
</feature>
<feature type="binding site" evidence="1">
    <location>
        <begin position="180"/>
        <end position="181"/>
    </location>
    <ligand>
        <name>substrate</name>
    </ligand>
</feature>
<feature type="site" description="Transition state stabilizer" evidence="1">
    <location>
        <position position="179"/>
    </location>
</feature>
<proteinExistence type="inferred from homology"/>
<organism>
    <name type="scientific">Sphingopyxis alaskensis (strain DSM 13593 / LMG 18877 / RB2256)</name>
    <name type="common">Sphingomonas alaskensis</name>
    <dbReference type="NCBI Taxonomy" id="317655"/>
    <lineage>
        <taxon>Bacteria</taxon>
        <taxon>Pseudomonadati</taxon>
        <taxon>Pseudomonadota</taxon>
        <taxon>Alphaproteobacteria</taxon>
        <taxon>Sphingomonadales</taxon>
        <taxon>Sphingomonadaceae</taxon>
        <taxon>Sphingopyxis</taxon>
    </lineage>
</organism>